<evidence type="ECO:0000255" key="1">
    <source>
        <dbReference type="HAMAP-Rule" id="MF_00128"/>
    </source>
</evidence>
<reference key="1">
    <citation type="journal article" date="2010" name="PLoS Genet.">
        <title>Genome sequence of the plant growth promoting endophytic bacterium Enterobacter sp. 638.</title>
        <authorList>
            <person name="Taghavi S."/>
            <person name="van der Lelie D."/>
            <person name="Hoffman A."/>
            <person name="Zhang Y.B."/>
            <person name="Walla M.D."/>
            <person name="Vangronsveld J."/>
            <person name="Newman L."/>
            <person name="Monchy S."/>
        </authorList>
    </citation>
    <scope>NUCLEOTIDE SEQUENCE [LARGE SCALE GENOMIC DNA]</scope>
    <source>
        <strain>638</strain>
    </source>
</reference>
<protein>
    <recommendedName>
        <fullName evidence="1">Protein NrdI</fullName>
    </recommendedName>
</protein>
<feature type="chain" id="PRO_1000057836" description="Protein NrdI">
    <location>
        <begin position="1"/>
        <end position="136"/>
    </location>
</feature>
<organism>
    <name type="scientific">Enterobacter sp. (strain 638)</name>
    <dbReference type="NCBI Taxonomy" id="399742"/>
    <lineage>
        <taxon>Bacteria</taxon>
        <taxon>Pseudomonadati</taxon>
        <taxon>Pseudomonadota</taxon>
        <taxon>Gammaproteobacteria</taxon>
        <taxon>Enterobacterales</taxon>
        <taxon>Enterobacteriaceae</taxon>
        <taxon>Enterobacter</taxon>
    </lineage>
</organism>
<proteinExistence type="inferred from homology"/>
<sequence>MSVLVYFSSSSENTLRFIERVGLPAVRIPLNERERIQVDEPYILVVPSYGGGGTAGAVPRQVIRFLNDPHNRALIRGVIAAGNRNFGDAFCRAGDLISQKCGVPYLYRFELMGTQQDVENVRKGVNEFWQRQPQNA</sequence>
<comment type="function">
    <text evidence="1">Probably involved in ribonucleotide reductase function.</text>
</comment>
<comment type="similarity">
    <text evidence="1">Belongs to the NrdI family.</text>
</comment>
<gene>
    <name evidence="1" type="primary">nrdI</name>
    <name type="ordered locus">Ent638_3154</name>
</gene>
<accession>A4WDN8</accession>
<dbReference type="EMBL" id="CP000653">
    <property type="protein sequence ID" value="ABP61818.1"/>
    <property type="molecule type" value="Genomic_DNA"/>
</dbReference>
<dbReference type="RefSeq" id="WP_015960148.1">
    <property type="nucleotide sequence ID" value="NC_009436.1"/>
</dbReference>
<dbReference type="SMR" id="A4WDN8"/>
<dbReference type="STRING" id="399742.Ent638_3154"/>
<dbReference type="KEGG" id="ent:Ent638_3154"/>
<dbReference type="eggNOG" id="COG1780">
    <property type="taxonomic scope" value="Bacteria"/>
</dbReference>
<dbReference type="HOGENOM" id="CLU_114845_0_0_6"/>
<dbReference type="OrthoDB" id="350535at2"/>
<dbReference type="Proteomes" id="UP000000230">
    <property type="component" value="Chromosome"/>
</dbReference>
<dbReference type="GO" id="GO:0010181">
    <property type="term" value="F:FMN binding"/>
    <property type="evidence" value="ECO:0007669"/>
    <property type="project" value="InterPro"/>
</dbReference>
<dbReference type="GO" id="GO:0036211">
    <property type="term" value="P:protein modification process"/>
    <property type="evidence" value="ECO:0007669"/>
    <property type="project" value="InterPro"/>
</dbReference>
<dbReference type="FunFam" id="3.40.50.360:FF:000005">
    <property type="entry name" value="Protein NrdI"/>
    <property type="match status" value="1"/>
</dbReference>
<dbReference type="Gene3D" id="3.40.50.360">
    <property type="match status" value="1"/>
</dbReference>
<dbReference type="HAMAP" id="MF_00128">
    <property type="entry name" value="NrdI"/>
    <property type="match status" value="1"/>
</dbReference>
<dbReference type="InterPro" id="IPR029039">
    <property type="entry name" value="Flavoprotein-like_sf"/>
</dbReference>
<dbReference type="InterPro" id="IPR020852">
    <property type="entry name" value="RNR_Ib_NrdI_bac"/>
</dbReference>
<dbReference type="InterPro" id="IPR004465">
    <property type="entry name" value="RNR_NrdI"/>
</dbReference>
<dbReference type="NCBIfam" id="TIGR00333">
    <property type="entry name" value="nrdI"/>
    <property type="match status" value="1"/>
</dbReference>
<dbReference type="PANTHER" id="PTHR37297">
    <property type="entry name" value="PROTEIN NRDI"/>
    <property type="match status" value="1"/>
</dbReference>
<dbReference type="PANTHER" id="PTHR37297:SF1">
    <property type="entry name" value="PROTEIN NRDI"/>
    <property type="match status" value="1"/>
</dbReference>
<dbReference type="Pfam" id="PF07972">
    <property type="entry name" value="Flavodoxin_NdrI"/>
    <property type="match status" value="1"/>
</dbReference>
<dbReference type="PIRSF" id="PIRSF005087">
    <property type="entry name" value="NrdI"/>
    <property type="match status" value="1"/>
</dbReference>
<dbReference type="SUPFAM" id="SSF52218">
    <property type="entry name" value="Flavoproteins"/>
    <property type="match status" value="1"/>
</dbReference>
<name>NRDI_ENT38</name>